<feature type="chain" id="PRO_0000377119" description="tRNA dimethylallyltransferase">
    <location>
        <begin position="1"/>
        <end position="296"/>
    </location>
</feature>
<feature type="region of interest" description="Interaction with substrate tRNA" evidence="1">
    <location>
        <begin position="34"/>
        <end position="37"/>
    </location>
</feature>
<feature type="binding site" evidence="1">
    <location>
        <begin position="9"/>
        <end position="16"/>
    </location>
    <ligand>
        <name>ATP</name>
        <dbReference type="ChEBI" id="CHEBI:30616"/>
    </ligand>
</feature>
<feature type="binding site" evidence="1">
    <location>
        <begin position="11"/>
        <end position="16"/>
    </location>
    <ligand>
        <name>substrate</name>
    </ligand>
</feature>
<feature type="site" description="Interaction with substrate tRNA" evidence="1">
    <location>
        <position position="100"/>
    </location>
</feature>
<feature type="site" description="Interaction with substrate tRNA" evidence="1">
    <location>
        <position position="123"/>
    </location>
</feature>
<accession>B8G9R5</accession>
<evidence type="ECO:0000255" key="1">
    <source>
        <dbReference type="HAMAP-Rule" id="MF_00185"/>
    </source>
</evidence>
<comment type="function">
    <text evidence="1">Catalyzes the transfer of a dimethylallyl group onto the adenine at position 37 in tRNAs that read codons beginning with uridine, leading to the formation of N6-(dimethylallyl)adenosine (i(6)A).</text>
</comment>
<comment type="catalytic activity">
    <reaction evidence="1">
        <text>adenosine(37) in tRNA + dimethylallyl diphosphate = N(6)-dimethylallyladenosine(37) in tRNA + diphosphate</text>
        <dbReference type="Rhea" id="RHEA:26482"/>
        <dbReference type="Rhea" id="RHEA-COMP:10162"/>
        <dbReference type="Rhea" id="RHEA-COMP:10375"/>
        <dbReference type="ChEBI" id="CHEBI:33019"/>
        <dbReference type="ChEBI" id="CHEBI:57623"/>
        <dbReference type="ChEBI" id="CHEBI:74411"/>
        <dbReference type="ChEBI" id="CHEBI:74415"/>
        <dbReference type="EC" id="2.5.1.75"/>
    </reaction>
</comment>
<comment type="cofactor">
    <cofactor evidence="1">
        <name>Mg(2+)</name>
        <dbReference type="ChEBI" id="CHEBI:18420"/>
    </cofactor>
</comment>
<comment type="subunit">
    <text evidence="1">Monomer.</text>
</comment>
<comment type="similarity">
    <text evidence="1">Belongs to the IPP transferase family.</text>
</comment>
<keyword id="KW-0067">ATP-binding</keyword>
<keyword id="KW-0460">Magnesium</keyword>
<keyword id="KW-0547">Nucleotide-binding</keyword>
<keyword id="KW-0808">Transferase</keyword>
<keyword id="KW-0819">tRNA processing</keyword>
<organism>
    <name type="scientific">Chloroflexus aggregans (strain MD-66 / DSM 9485)</name>
    <dbReference type="NCBI Taxonomy" id="326427"/>
    <lineage>
        <taxon>Bacteria</taxon>
        <taxon>Bacillati</taxon>
        <taxon>Chloroflexota</taxon>
        <taxon>Chloroflexia</taxon>
        <taxon>Chloroflexales</taxon>
        <taxon>Chloroflexineae</taxon>
        <taxon>Chloroflexaceae</taxon>
        <taxon>Chloroflexus</taxon>
    </lineage>
</organism>
<proteinExistence type="inferred from homology"/>
<dbReference type="EC" id="2.5.1.75" evidence="1"/>
<dbReference type="EMBL" id="CP001337">
    <property type="protein sequence ID" value="ACL26418.1"/>
    <property type="molecule type" value="Genomic_DNA"/>
</dbReference>
<dbReference type="RefSeq" id="WP_015942264.1">
    <property type="nucleotide sequence ID" value="NC_011831.1"/>
</dbReference>
<dbReference type="SMR" id="B8G9R5"/>
<dbReference type="STRING" id="326427.Cagg_3580"/>
<dbReference type="KEGG" id="cag:Cagg_3580"/>
<dbReference type="eggNOG" id="COG0324">
    <property type="taxonomic scope" value="Bacteria"/>
</dbReference>
<dbReference type="HOGENOM" id="CLU_032616_0_1_0"/>
<dbReference type="OrthoDB" id="9776390at2"/>
<dbReference type="Proteomes" id="UP000002508">
    <property type="component" value="Chromosome"/>
</dbReference>
<dbReference type="GO" id="GO:0005524">
    <property type="term" value="F:ATP binding"/>
    <property type="evidence" value="ECO:0007669"/>
    <property type="project" value="UniProtKB-UniRule"/>
</dbReference>
<dbReference type="GO" id="GO:0052381">
    <property type="term" value="F:tRNA dimethylallyltransferase activity"/>
    <property type="evidence" value="ECO:0007669"/>
    <property type="project" value="UniProtKB-UniRule"/>
</dbReference>
<dbReference type="GO" id="GO:0006400">
    <property type="term" value="P:tRNA modification"/>
    <property type="evidence" value="ECO:0007669"/>
    <property type="project" value="TreeGrafter"/>
</dbReference>
<dbReference type="FunFam" id="1.10.20.140:FF:000001">
    <property type="entry name" value="tRNA dimethylallyltransferase"/>
    <property type="match status" value="1"/>
</dbReference>
<dbReference type="Gene3D" id="1.10.20.140">
    <property type="match status" value="1"/>
</dbReference>
<dbReference type="Gene3D" id="3.40.50.300">
    <property type="entry name" value="P-loop containing nucleotide triphosphate hydrolases"/>
    <property type="match status" value="1"/>
</dbReference>
<dbReference type="HAMAP" id="MF_00185">
    <property type="entry name" value="IPP_trans"/>
    <property type="match status" value="1"/>
</dbReference>
<dbReference type="InterPro" id="IPR039657">
    <property type="entry name" value="Dimethylallyltransferase"/>
</dbReference>
<dbReference type="InterPro" id="IPR018022">
    <property type="entry name" value="IPT"/>
</dbReference>
<dbReference type="InterPro" id="IPR027417">
    <property type="entry name" value="P-loop_NTPase"/>
</dbReference>
<dbReference type="NCBIfam" id="TIGR00174">
    <property type="entry name" value="miaA"/>
    <property type="match status" value="1"/>
</dbReference>
<dbReference type="PANTHER" id="PTHR11088">
    <property type="entry name" value="TRNA DIMETHYLALLYLTRANSFERASE"/>
    <property type="match status" value="1"/>
</dbReference>
<dbReference type="PANTHER" id="PTHR11088:SF60">
    <property type="entry name" value="TRNA DIMETHYLALLYLTRANSFERASE"/>
    <property type="match status" value="1"/>
</dbReference>
<dbReference type="Pfam" id="PF01715">
    <property type="entry name" value="IPPT"/>
    <property type="match status" value="1"/>
</dbReference>
<dbReference type="SUPFAM" id="SSF52540">
    <property type="entry name" value="P-loop containing nucleoside triphosphate hydrolases"/>
    <property type="match status" value="1"/>
</dbReference>
<name>MIAA_CHLAD</name>
<protein>
    <recommendedName>
        <fullName evidence="1">tRNA dimethylallyltransferase</fullName>
        <ecNumber evidence="1">2.5.1.75</ecNumber>
    </recommendedName>
    <alternativeName>
        <fullName evidence="1">Dimethylallyl diphosphate:tRNA dimethylallyltransferase</fullName>
        <shortName evidence="1">DMAPP:tRNA dimethylallyltransferase</shortName>
        <shortName evidence="1">DMATase</shortName>
    </alternativeName>
    <alternativeName>
        <fullName evidence="1">Isopentenyl-diphosphate:tRNA isopentenyltransferase</fullName>
        <shortName evidence="1">IPP transferase</shortName>
        <shortName evidence="1">IPPT</shortName>
        <shortName evidence="1">IPTase</shortName>
    </alternativeName>
</protein>
<gene>
    <name evidence="1" type="primary">miaA</name>
    <name type="ordered locus">Cagg_3580</name>
</gene>
<reference key="1">
    <citation type="submission" date="2008-12" db="EMBL/GenBank/DDBJ databases">
        <title>Complete sequence of Chloroflexus aggregans DSM 9485.</title>
        <authorList>
            <consortium name="US DOE Joint Genome Institute"/>
            <person name="Lucas S."/>
            <person name="Copeland A."/>
            <person name="Lapidus A."/>
            <person name="Glavina del Rio T."/>
            <person name="Dalin E."/>
            <person name="Tice H."/>
            <person name="Pitluck S."/>
            <person name="Foster B."/>
            <person name="Larimer F."/>
            <person name="Land M."/>
            <person name="Hauser L."/>
            <person name="Kyrpides N."/>
            <person name="Mikhailova N."/>
            <person name="Bryant D.A."/>
            <person name="Richardson P."/>
        </authorList>
    </citation>
    <scope>NUCLEOTIDE SEQUENCE [LARGE SCALE GENOMIC DNA]</scope>
    <source>
        <strain>MD-66 / DSM 9485</strain>
    </source>
</reference>
<sequence>MNELIAIVGPTAVGKTELAVAWAQRINGEIVSADSRQIYRKMNIGTAKPSATEQALAPHHLIDIRDPEQSFSLAEFQDLALAAIADIQARGHVPLLVGGTGQYLAAVLEGWQIPRVPPQPELRAELEQVALHEGPATLHARLAAVDPVAAARIPPTNVRRVIRALEVYLVSGEPISRLQERQPPPFRPRTIWLHRPRTELYARADARIERMIAAGLVDEVAELLAGGYDWSLPAMSSLGYIQFRPYFEGTADLTTCIERLRFDTHAFIRRQEMWFRRLPNLEIWTPDHPDWRAIIA</sequence>